<comment type="function">
    <text evidence="1">Produces ATP from ADP in the presence of a proton gradient across the membrane. The alpha chain is a regulatory subunit.</text>
</comment>
<comment type="catalytic activity">
    <reaction evidence="1">
        <text>ATP + H2O + 4 H(+)(in) = ADP + phosphate + 5 H(+)(out)</text>
        <dbReference type="Rhea" id="RHEA:57720"/>
        <dbReference type="ChEBI" id="CHEBI:15377"/>
        <dbReference type="ChEBI" id="CHEBI:15378"/>
        <dbReference type="ChEBI" id="CHEBI:30616"/>
        <dbReference type="ChEBI" id="CHEBI:43474"/>
        <dbReference type="ChEBI" id="CHEBI:456216"/>
        <dbReference type="EC" id="7.1.2.2"/>
    </reaction>
</comment>
<comment type="subunit">
    <text evidence="1">F-type ATPases have 2 components, CF(1) - the catalytic core - and CF(0) - the membrane proton channel. CF(1) has five subunits: alpha(3), beta(3), gamma(1), delta(1), epsilon(1). CF(0) has three main subunits: a(1), b(2) and c(9-12). The alpha and beta chains form an alternating ring which encloses part of the gamma chain. CF(1) is attached to CF(0) by a central stalk formed by the gamma and epsilon chains, while a peripheral stalk is formed by the delta and b chains.</text>
</comment>
<comment type="subcellular location">
    <subcellularLocation>
        <location evidence="1">Cell inner membrane</location>
        <topology evidence="1">Peripheral membrane protein</topology>
    </subcellularLocation>
</comment>
<comment type="similarity">
    <text evidence="1">Belongs to the ATPase alpha/beta chains family.</text>
</comment>
<protein>
    <recommendedName>
        <fullName evidence="1">ATP synthase subunit alpha</fullName>
        <ecNumber evidence="1">7.1.2.2</ecNumber>
    </recommendedName>
    <alternativeName>
        <fullName evidence="1">ATP synthase F1 sector subunit alpha</fullName>
    </alternativeName>
    <alternativeName>
        <fullName evidence="1">F-ATPase subunit alpha</fullName>
    </alternativeName>
</protein>
<feature type="chain" id="PRO_0000302647" description="ATP synthase subunit alpha">
    <location>
        <begin position="1"/>
        <end position="513"/>
    </location>
</feature>
<feature type="binding site" evidence="1">
    <location>
        <begin position="169"/>
        <end position="176"/>
    </location>
    <ligand>
        <name>ATP</name>
        <dbReference type="ChEBI" id="CHEBI:30616"/>
    </ligand>
</feature>
<feature type="site" description="Required for activity" evidence="1">
    <location>
        <position position="373"/>
    </location>
</feature>
<sequence>MQLSPSEISGLIKQRIEKFDNSVELKSEGTIVSVADGIVTIYGLNDVAAGEMIKLPGDVYGLALNLNTDSVGAVVLGDYEHIKEGDKAYCTGRILEVPVGEALLGRVVDALGNPIDGKGEVATDLTSPIEKIAPGVIWRKSVDQALQTGIKSIDSMVPIGRGQRELIIGDRQIGKTAIAVDTIINQKGTGVKCIYVAIGQKASTIANIVRQLEEHGAMEHTIIVAATASDSAALQYIAPYAGCSMGEYFRDRGQDALIVYDDLTKQAWAYRQISLLLRRPPGREAYPGDVFYLHSRLLERAARVNEEYVEKFTNGEVKGKTGSLTALPIIETQAGDISAFVPTNVISITDGQIFLETDLFNSGLRPAINPGNSVSRVGGAAQTKIIKKLGGGIRLALAQYRELEAFSQFASDLDEATRAQLNRGQRVTELLKQKQFSTLSVALMALSLYAADNGYLDNLEVSEVIPFESALHALAETKYSDVIAEINETGKYDADIADKLKIIVEDCKANQAW</sequence>
<accession>A0Q8E1</accession>
<dbReference type="EC" id="7.1.2.2" evidence="1"/>
<dbReference type="EMBL" id="CP000439">
    <property type="protein sequence ID" value="ABK90506.1"/>
    <property type="molecule type" value="Genomic_DNA"/>
</dbReference>
<dbReference type="RefSeq" id="WP_003037711.1">
    <property type="nucleotide sequence ID" value="NZ_CP009633.1"/>
</dbReference>
<dbReference type="SMR" id="A0Q8E1"/>
<dbReference type="GeneID" id="75264621"/>
<dbReference type="KEGG" id="ftn:FTN_1648"/>
<dbReference type="KEGG" id="ftx:AW25_340"/>
<dbReference type="BioCyc" id="FTUL401614:G1G75-1709-MONOMER"/>
<dbReference type="Proteomes" id="UP000000762">
    <property type="component" value="Chromosome"/>
</dbReference>
<dbReference type="GO" id="GO:0005886">
    <property type="term" value="C:plasma membrane"/>
    <property type="evidence" value="ECO:0007669"/>
    <property type="project" value="UniProtKB-SubCell"/>
</dbReference>
<dbReference type="GO" id="GO:0045259">
    <property type="term" value="C:proton-transporting ATP synthase complex"/>
    <property type="evidence" value="ECO:0007669"/>
    <property type="project" value="UniProtKB-KW"/>
</dbReference>
<dbReference type="GO" id="GO:0043531">
    <property type="term" value="F:ADP binding"/>
    <property type="evidence" value="ECO:0007669"/>
    <property type="project" value="TreeGrafter"/>
</dbReference>
<dbReference type="GO" id="GO:0005524">
    <property type="term" value="F:ATP binding"/>
    <property type="evidence" value="ECO:0007669"/>
    <property type="project" value="UniProtKB-UniRule"/>
</dbReference>
<dbReference type="GO" id="GO:0046933">
    <property type="term" value="F:proton-transporting ATP synthase activity, rotational mechanism"/>
    <property type="evidence" value="ECO:0007669"/>
    <property type="project" value="UniProtKB-UniRule"/>
</dbReference>
<dbReference type="CDD" id="cd18113">
    <property type="entry name" value="ATP-synt_F1_alpha_C"/>
    <property type="match status" value="1"/>
</dbReference>
<dbReference type="CDD" id="cd18116">
    <property type="entry name" value="ATP-synt_F1_alpha_N"/>
    <property type="match status" value="1"/>
</dbReference>
<dbReference type="CDD" id="cd01132">
    <property type="entry name" value="F1-ATPase_alpha_CD"/>
    <property type="match status" value="1"/>
</dbReference>
<dbReference type="FunFam" id="1.20.150.20:FF:000001">
    <property type="entry name" value="ATP synthase subunit alpha"/>
    <property type="match status" value="1"/>
</dbReference>
<dbReference type="FunFam" id="2.40.30.20:FF:000001">
    <property type="entry name" value="ATP synthase subunit alpha"/>
    <property type="match status" value="1"/>
</dbReference>
<dbReference type="FunFam" id="3.40.50.300:FF:000002">
    <property type="entry name" value="ATP synthase subunit alpha"/>
    <property type="match status" value="1"/>
</dbReference>
<dbReference type="Gene3D" id="2.40.30.20">
    <property type="match status" value="1"/>
</dbReference>
<dbReference type="Gene3D" id="1.20.150.20">
    <property type="entry name" value="ATP synthase alpha/beta chain, C-terminal domain"/>
    <property type="match status" value="1"/>
</dbReference>
<dbReference type="Gene3D" id="3.40.50.300">
    <property type="entry name" value="P-loop containing nucleotide triphosphate hydrolases"/>
    <property type="match status" value="1"/>
</dbReference>
<dbReference type="HAMAP" id="MF_01346">
    <property type="entry name" value="ATP_synth_alpha_bact"/>
    <property type="match status" value="1"/>
</dbReference>
<dbReference type="InterPro" id="IPR023366">
    <property type="entry name" value="ATP_synth_asu-like_sf"/>
</dbReference>
<dbReference type="InterPro" id="IPR000793">
    <property type="entry name" value="ATP_synth_asu_C"/>
</dbReference>
<dbReference type="InterPro" id="IPR038376">
    <property type="entry name" value="ATP_synth_asu_C_sf"/>
</dbReference>
<dbReference type="InterPro" id="IPR033732">
    <property type="entry name" value="ATP_synth_F1_a_nt-bd_dom"/>
</dbReference>
<dbReference type="InterPro" id="IPR005294">
    <property type="entry name" value="ATP_synth_F1_asu"/>
</dbReference>
<dbReference type="InterPro" id="IPR020003">
    <property type="entry name" value="ATPase_a/bsu_AS"/>
</dbReference>
<dbReference type="InterPro" id="IPR004100">
    <property type="entry name" value="ATPase_F1/V1/A1_a/bsu_N"/>
</dbReference>
<dbReference type="InterPro" id="IPR036121">
    <property type="entry name" value="ATPase_F1/V1/A1_a/bsu_N_sf"/>
</dbReference>
<dbReference type="InterPro" id="IPR000194">
    <property type="entry name" value="ATPase_F1/V1/A1_a/bsu_nucl-bd"/>
</dbReference>
<dbReference type="InterPro" id="IPR027417">
    <property type="entry name" value="P-loop_NTPase"/>
</dbReference>
<dbReference type="NCBIfam" id="TIGR00962">
    <property type="entry name" value="atpA"/>
    <property type="match status" value="1"/>
</dbReference>
<dbReference type="NCBIfam" id="NF009884">
    <property type="entry name" value="PRK13343.1"/>
    <property type="match status" value="1"/>
</dbReference>
<dbReference type="PANTHER" id="PTHR48082">
    <property type="entry name" value="ATP SYNTHASE SUBUNIT ALPHA, MITOCHONDRIAL"/>
    <property type="match status" value="1"/>
</dbReference>
<dbReference type="PANTHER" id="PTHR48082:SF2">
    <property type="entry name" value="ATP SYNTHASE SUBUNIT ALPHA, MITOCHONDRIAL"/>
    <property type="match status" value="1"/>
</dbReference>
<dbReference type="Pfam" id="PF00006">
    <property type="entry name" value="ATP-synt_ab"/>
    <property type="match status" value="1"/>
</dbReference>
<dbReference type="Pfam" id="PF00306">
    <property type="entry name" value="ATP-synt_ab_C"/>
    <property type="match status" value="1"/>
</dbReference>
<dbReference type="Pfam" id="PF02874">
    <property type="entry name" value="ATP-synt_ab_N"/>
    <property type="match status" value="1"/>
</dbReference>
<dbReference type="PIRSF" id="PIRSF039088">
    <property type="entry name" value="F_ATPase_subunit_alpha"/>
    <property type="match status" value="1"/>
</dbReference>
<dbReference type="SUPFAM" id="SSF47917">
    <property type="entry name" value="C-terminal domain of alpha and beta subunits of F1 ATP synthase"/>
    <property type="match status" value="1"/>
</dbReference>
<dbReference type="SUPFAM" id="SSF50615">
    <property type="entry name" value="N-terminal domain of alpha and beta subunits of F1 ATP synthase"/>
    <property type="match status" value="1"/>
</dbReference>
<dbReference type="SUPFAM" id="SSF52540">
    <property type="entry name" value="P-loop containing nucleoside triphosphate hydrolases"/>
    <property type="match status" value="1"/>
</dbReference>
<dbReference type="PROSITE" id="PS00152">
    <property type="entry name" value="ATPASE_ALPHA_BETA"/>
    <property type="match status" value="1"/>
</dbReference>
<gene>
    <name evidence="1" type="primary">atpA</name>
    <name type="ordered locus">FTN_1648</name>
</gene>
<name>ATPA_FRATN</name>
<reference key="1">
    <citation type="journal article" date="2007" name="Genome Biol.">
        <title>Comparison of Francisella tularensis genomes reveals evolutionary events associated with the emergence of human pathogenic strains.</title>
        <authorList>
            <person name="Rohmer L."/>
            <person name="Fong C."/>
            <person name="Abmayr S."/>
            <person name="Wasnick M."/>
            <person name="Larson Freeman T.J."/>
            <person name="Radey M."/>
            <person name="Guina T."/>
            <person name="Svensson K."/>
            <person name="Hayden H.S."/>
            <person name="Jacobs M."/>
            <person name="Gallagher L.A."/>
            <person name="Manoil C."/>
            <person name="Ernst R.K."/>
            <person name="Drees B."/>
            <person name="Buckley D."/>
            <person name="Haugen E."/>
            <person name="Bovee D."/>
            <person name="Zhou Y."/>
            <person name="Chang J."/>
            <person name="Levy R."/>
            <person name="Lim R."/>
            <person name="Gillett W."/>
            <person name="Guenthener D."/>
            <person name="Kang A."/>
            <person name="Shaffer S.A."/>
            <person name="Taylor G."/>
            <person name="Chen J."/>
            <person name="Gallis B."/>
            <person name="D'Argenio D.A."/>
            <person name="Forsman M."/>
            <person name="Olson M.V."/>
            <person name="Goodlett D.R."/>
            <person name="Kaul R."/>
            <person name="Miller S.I."/>
            <person name="Brittnacher M.J."/>
        </authorList>
    </citation>
    <scope>NUCLEOTIDE SEQUENCE [LARGE SCALE GENOMIC DNA]</scope>
    <source>
        <strain>U112</strain>
    </source>
</reference>
<keyword id="KW-0066">ATP synthesis</keyword>
<keyword id="KW-0067">ATP-binding</keyword>
<keyword id="KW-0997">Cell inner membrane</keyword>
<keyword id="KW-1003">Cell membrane</keyword>
<keyword id="KW-0139">CF(1)</keyword>
<keyword id="KW-0375">Hydrogen ion transport</keyword>
<keyword id="KW-0406">Ion transport</keyword>
<keyword id="KW-0472">Membrane</keyword>
<keyword id="KW-0547">Nucleotide-binding</keyword>
<keyword id="KW-1278">Translocase</keyword>
<keyword id="KW-0813">Transport</keyword>
<organism>
    <name type="scientific">Francisella tularensis subsp. novicida (strain U112)</name>
    <dbReference type="NCBI Taxonomy" id="401614"/>
    <lineage>
        <taxon>Bacteria</taxon>
        <taxon>Pseudomonadati</taxon>
        <taxon>Pseudomonadota</taxon>
        <taxon>Gammaproteobacteria</taxon>
        <taxon>Thiotrichales</taxon>
        <taxon>Francisellaceae</taxon>
        <taxon>Francisella</taxon>
    </lineage>
</organism>
<evidence type="ECO:0000255" key="1">
    <source>
        <dbReference type="HAMAP-Rule" id="MF_01346"/>
    </source>
</evidence>
<proteinExistence type="inferred from homology"/>